<comment type="subunit">
    <text evidence="1">Forms oligomers.</text>
</comment>
<comment type="subcellular location">
    <subcellularLocation>
        <location evidence="1">Cytoplasm</location>
        <location evidence="1">Nucleoid</location>
    </subcellularLocation>
</comment>
<comment type="similarity">
    <text evidence="1">Belongs to the MraZ family.</text>
</comment>
<sequence>MEDNAFTGAYSYNLDEKGRLMLPARLRVALSDTRLVLTCAIESCLWVFPRAQWDRFSSQISARASLFHAPSRAVLRRLIAPAQEVELDRAWRLFIPPSLREYAALEKDCLILGLSHCLEIWDRARYRAYLAESEADFRAGTETLQDLCL</sequence>
<dbReference type="EMBL" id="CP000805">
    <property type="protein sequence ID" value="ACD70809.1"/>
    <property type="molecule type" value="Genomic_DNA"/>
</dbReference>
<dbReference type="RefSeq" id="WP_010881831.1">
    <property type="nucleotide sequence ID" value="NC_021508.1"/>
</dbReference>
<dbReference type="SMR" id="B2S2Y0"/>
<dbReference type="GeneID" id="93876157"/>
<dbReference type="KEGG" id="tpp:TPASS_0383"/>
<dbReference type="PATRIC" id="fig|455434.6.peg.385"/>
<dbReference type="Proteomes" id="UP000001202">
    <property type="component" value="Chromosome"/>
</dbReference>
<dbReference type="GO" id="GO:0005737">
    <property type="term" value="C:cytoplasm"/>
    <property type="evidence" value="ECO:0007669"/>
    <property type="project" value="UniProtKB-UniRule"/>
</dbReference>
<dbReference type="GO" id="GO:0009295">
    <property type="term" value="C:nucleoid"/>
    <property type="evidence" value="ECO:0007669"/>
    <property type="project" value="UniProtKB-SubCell"/>
</dbReference>
<dbReference type="GO" id="GO:0003700">
    <property type="term" value="F:DNA-binding transcription factor activity"/>
    <property type="evidence" value="ECO:0007669"/>
    <property type="project" value="UniProtKB-UniRule"/>
</dbReference>
<dbReference type="GO" id="GO:0000976">
    <property type="term" value="F:transcription cis-regulatory region binding"/>
    <property type="evidence" value="ECO:0007669"/>
    <property type="project" value="TreeGrafter"/>
</dbReference>
<dbReference type="GO" id="GO:2000143">
    <property type="term" value="P:negative regulation of DNA-templated transcription initiation"/>
    <property type="evidence" value="ECO:0007669"/>
    <property type="project" value="TreeGrafter"/>
</dbReference>
<dbReference type="CDD" id="cd16321">
    <property type="entry name" value="MraZ_C"/>
    <property type="match status" value="1"/>
</dbReference>
<dbReference type="CDD" id="cd16320">
    <property type="entry name" value="MraZ_N"/>
    <property type="match status" value="1"/>
</dbReference>
<dbReference type="Gene3D" id="3.40.1550.20">
    <property type="entry name" value="Transcriptional regulator MraZ domain"/>
    <property type="match status" value="1"/>
</dbReference>
<dbReference type="HAMAP" id="MF_01008">
    <property type="entry name" value="MraZ"/>
    <property type="match status" value="1"/>
</dbReference>
<dbReference type="InterPro" id="IPR003444">
    <property type="entry name" value="MraZ"/>
</dbReference>
<dbReference type="InterPro" id="IPR035644">
    <property type="entry name" value="MraZ_C"/>
</dbReference>
<dbReference type="InterPro" id="IPR020603">
    <property type="entry name" value="MraZ_dom"/>
</dbReference>
<dbReference type="InterPro" id="IPR035642">
    <property type="entry name" value="MraZ_N"/>
</dbReference>
<dbReference type="InterPro" id="IPR038619">
    <property type="entry name" value="MraZ_sf"/>
</dbReference>
<dbReference type="InterPro" id="IPR007159">
    <property type="entry name" value="SpoVT-AbrB_dom"/>
</dbReference>
<dbReference type="InterPro" id="IPR037914">
    <property type="entry name" value="SpoVT-AbrB_sf"/>
</dbReference>
<dbReference type="NCBIfam" id="TIGR00242">
    <property type="entry name" value="division/cell wall cluster transcriptional repressor MraZ"/>
    <property type="match status" value="1"/>
</dbReference>
<dbReference type="PANTHER" id="PTHR34701">
    <property type="entry name" value="TRANSCRIPTIONAL REGULATOR MRAZ"/>
    <property type="match status" value="1"/>
</dbReference>
<dbReference type="PANTHER" id="PTHR34701:SF1">
    <property type="entry name" value="TRANSCRIPTIONAL REGULATOR MRAZ"/>
    <property type="match status" value="1"/>
</dbReference>
<dbReference type="Pfam" id="PF02381">
    <property type="entry name" value="MraZ"/>
    <property type="match status" value="2"/>
</dbReference>
<dbReference type="SUPFAM" id="SSF89447">
    <property type="entry name" value="AbrB/MazE/MraZ-like"/>
    <property type="match status" value="1"/>
</dbReference>
<dbReference type="PROSITE" id="PS51740">
    <property type="entry name" value="SPOVT_ABRB"/>
    <property type="match status" value="2"/>
</dbReference>
<proteinExistence type="inferred from homology"/>
<name>MRAZ_TREPS</name>
<organism>
    <name type="scientific">Treponema pallidum subsp. pallidum (strain SS14)</name>
    <dbReference type="NCBI Taxonomy" id="455434"/>
    <lineage>
        <taxon>Bacteria</taxon>
        <taxon>Pseudomonadati</taxon>
        <taxon>Spirochaetota</taxon>
        <taxon>Spirochaetia</taxon>
        <taxon>Spirochaetales</taxon>
        <taxon>Treponemataceae</taxon>
        <taxon>Treponema</taxon>
    </lineage>
</organism>
<keyword id="KW-0963">Cytoplasm</keyword>
<keyword id="KW-0238">DNA-binding</keyword>
<keyword id="KW-0677">Repeat</keyword>
<keyword id="KW-0804">Transcription</keyword>
<keyword id="KW-0805">Transcription regulation</keyword>
<gene>
    <name evidence="1" type="primary">mraZ</name>
    <name type="ordered locus">TPASS_0383</name>
</gene>
<protein>
    <recommendedName>
        <fullName>Transcriptional regulator MraZ</fullName>
    </recommendedName>
</protein>
<accession>B2S2Y0</accession>
<feature type="chain" id="PRO_1000191340" description="Transcriptional regulator MraZ">
    <location>
        <begin position="1"/>
        <end position="149"/>
    </location>
</feature>
<feature type="domain" description="SpoVT-AbrB 1" evidence="2">
    <location>
        <begin position="9"/>
        <end position="52"/>
    </location>
</feature>
<feature type="domain" description="SpoVT-AbrB 2" evidence="2">
    <location>
        <begin position="82"/>
        <end position="125"/>
    </location>
</feature>
<evidence type="ECO:0000255" key="1">
    <source>
        <dbReference type="HAMAP-Rule" id="MF_01008"/>
    </source>
</evidence>
<evidence type="ECO:0000255" key="2">
    <source>
        <dbReference type="PROSITE-ProRule" id="PRU01076"/>
    </source>
</evidence>
<reference key="1">
    <citation type="journal article" date="2008" name="BMC Microbiol.">
        <title>Complete genome sequence of Treponema pallidum ssp. pallidum strain SS14 determined with oligonucleotide arrays.</title>
        <authorList>
            <person name="Matejkova P."/>
            <person name="Strouhal M."/>
            <person name="Smajs D."/>
            <person name="Norris S.J."/>
            <person name="Palzkill T."/>
            <person name="Petrosino J.F."/>
            <person name="Sodergren E."/>
            <person name="Norton J.E."/>
            <person name="Singh J."/>
            <person name="Richmond T.A."/>
            <person name="Molla M.N."/>
            <person name="Albert T.J."/>
            <person name="Weinstock G.M."/>
        </authorList>
    </citation>
    <scope>NUCLEOTIDE SEQUENCE [LARGE SCALE GENOMIC DNA]</scope>
    <source>
        <strain>SS14</strain>
    </source>
</reference>